<accession>A2X8A7</accession>
<sequence length="697" mass="77951">MVNFGKRLMADQLEEWKEYYINYKMMKKKVKQYVQQTQNGGRNREQVLKEFSRMLDDQIEKIVLFLLQQQGHLASRIEKLGEERALLMEQADASQISELREAYREVGIDLMKLLRFVDMNATGIRKILKKFDKRFGYKFTDYYVSTRANHPCSQLQQIFKQVGIVAVVGALSRNLAFLQDHQGNFPSIYDHPSITLKDPIIEQINHSVQKLTHATNLLQFIGQHALIIPEDMHSGSEDLVDDQSYHFMSLLLNLANTFLYMVNTYIIVPTADDYSVSLGAAATVCGVIIGSMAVAQVFSSVYFSAWSNKSYFRPLVFSSIMLFLGNLLYALAYDVNSLTVLIVGRLLCGLGSARAVNRRYISDCVPLKTRLQASAGFVSASALGMACGPALAGLLQTNFKIYGFTFDQNTLPGWIMCLAWITYLFWLWISFKEPDHIVRENSVNTPSSDSGHRRNSNLEDGLAQPFLIDAKESLDENGEDNDENEEDPEDSHKPATSLAAAYRLLTPSVKVQLLIYFMLKFAMEILLSESSVVTTFYFNWSTSTVAMFLAVLGLTVLPVNVIVGSYVTNLFQDRQILVASEIMVLIGIAMSFRFTSHYSVPQYVSSALITFVFAEVLEGVNLSLLSRVMSSRLSRGTYNGGLLSTEAGTLARVAADMTITAAGYLGQNSLLNVTLLPSFVICVASIVATFCTYNSLY</sequence>
<feature type="chain" id="PRO_0000398570" description="SPX domain-containing membrane protein OsI_08463">
    <location>
        <begin position="1"/>
        <end position="697"/>
    </location>
</feature>
<feature type="transmembrane region" description="Helical" evidence="1">
    <location>
        <begin position="247"/>
        <end position="267"/>
    </location>
</feature>
<feature type="transmembrane region" description="Helical" evidence="1">
    <location>
        <begin position="278"/>
        <end position="298"/>
    </location>
</feature>
<feature type="transmembrane region" description="Helical" evidence="1">
    <location>
        <begin position="315"/>
        <end position="335"/>
    </location>
</feature>
<feature type="transmembrane region" description="Helical" evidence="1">
    <location>
        <begin position="338"/>
        <end position="356"/>
    </location>
</feature>
<feature type="transmembrane region" description="Helical" evidence="1">
    <location>
        <begin position="375"/>
        <end position="395"/>
    </location>
</feature>
<feature type="transmembrane region" description="Helical" evidence="1">
    <location>
        <begin position="411"/>
        <end position="431"/>
    </location>
</feature>
<feature type="transmembrane region" description="Helical" evidence="1">
    <location>
        <begin position="513"/>
        <end position="533"/>
    </location>
</feature>
<feature type="transmembrane region" description="Helical" evidence="1">
    <location>
        <begin position="544"/>
        <end position="564"/>
    </location>
</feature>
<feature type="transmembrane region" description="Helical" evidence="1">
    <location>
        <begin position="576"/>
        <end position="596"/>
    </location>
</feature>
<feature type="transmembrane region" description="Helical" evidence="1">
    <location>
        <begin position="604"/>
        <end position="624"/>
    </location>
</feature>
<feature type="transmembrane region" description="Helical" evidence="1">
    <location>
        <begin position="670"/>
        <end position="690"/>
    </location>
</feature>
<feature type="domain" description="SPX" evidence="2">
    <location>
        <begin position="2"/>
        <end position="145"/>
    </location>
</feature>
<protein>
    <recommendedName>
        <fullName>SPX domain-containing membrane protein OsI_08463</fullName>
    </recommendedName>
</protein>
<reference key="1">
    <citation type="journal article" date="2005" name="PLoS Biol.">
        <title>The genomes of Oryza sativa: a history of duplications.</title>
        <authorList>
            <person name="Yu J."/>
            <person name="Wang J."/>
            <person name="Lin W."/>
            <person name="Li S."/>
            <person name="Li H."/>
            <person name="Zhou J."/>
            <person name="Ni P."/>
            <person name="Dong W."/>
            <person name="Hu S."/>
            <person name="Zeng C."/>
            <person name="Zhang J."/>
            <person name="Zhang Y."/>
            <person name="Li R."/>
            <person name="Xu Z."/>
            <person name="Li S."/>
            <person name="Li X."/>
            <person name="Zheng H."/>
            <person name="Cong L."/>
            <person name="Lin L."/>
            <person name="Yin J."/>
            <person name="Geng J."/>
            <person name="Li G."/>
            <person name="Shi J."/>
            <person name="Liu J."/>
            <person name="Lv H."/>
            <person name="Li J."/>
            <person name="Wang J."/>
            <person name="Deng Y."/>
            <person name="Ran L."/>
            <person name="Shi X."/>
            <person name="Wang X."/>
            <person name="Wu Q."/>
            <person name="Li C."/>
            <person name="Ren X."/>
            <person name="Wang J."/>
            <person name="Wang X."/>
            <person name="Li D."/>
            <person name="Liu D."/>
            <person name="Zhang X."/>
            <person name="Ji Z."/>
            <person name="Zhao W."/>
            <person name="Sun Y."/>
            <person name="Zhang Z."/>
            <person name="Bao J."/>
            <person name="Han Y."/>
            <person name="Dong L."/>
            <person name="Ji J."/>
            <person name="Chen P."/>
            <person name="Wu S."/>
            <person name="Liu J."/>
            <person name="Xiao Y."/>
            <person name="Bu D."/>
            <person name="Tan J."/>
            <person name="Yang L."/>
            <person name="Ye C."/>
            <person name="Zhang J."/>
            <person name="Xu J."/>
            <person name="Zhou Y."/>
            <person name="Yu Y."/>
            <person name="Zhang B."/>
            <person name="Zhuang S."/>
            <person name="Wei H."/>
            <person name="Liu B."/>
            <person name="Lei M."/>
            <person name="Yu H."/>
            <person name="Li Y."/>
            <person name="Xu H."/>
            <person name="Wei S."/>
            <person name="He X."/>
            <person name="Fang L."/>
            <person name="Zhang Z."/>
            <person name="Zhang Y."/>
            <person name="Huang X."/>
            <person name="Su Z."/>
            <person name="Tong W."/>
            <person name="Li J."/>
            <person name="Tong Z."/>
            <person name="Li S."/>
            <person name="Ye J."/>
            <person name="Wang L."/>
            <person name="Fang L."/>
            <person name="Lei T."/>
            <person name="Chen C.-S."/>
            <person name="Chen H.-C."/>
            <person name="Xu Z."/>
            <person name="Li H."/>
            <person name="Huang H."/>
            <person name="Zhang F."/>
            <person name="Xu H."/>
            <person name="Li N."/>
            <person name="Zhao C."/>
            <person name="Li S."/>
            <person name="Dong L."/>
            <person name="Huang Y."/>
            <person name="Li L."/>
            <person name="Xi Y."/>
            <person name="Qi Q."/>
            <person name="Li W."/>
            <person name="Zhang B."/>
            <person name="Hu W."/>
            <person name="Zhang Y."/>
            <person name="Tian X."/>
            <person name="Jiao Y."/>
            <person name="Liang X."/>
            <person name="Jin J."/>
            <person name="Gao L."/>
            <person name="Zheng W."/>
            <person name="Hao B."/>
            <person name="Liu S.-M."/>
            <person name="Wang W."/>
            <person name="Yuan L."/>
            <person name="Cao M."/>
            <person name="McDermott J."/>
            <person name="Samudrala R."/>
            <person name="Wang J."/>
            <person name="Wong G.K.-S."/>
            <person name="Yang H."/>
        </authorList>
    </citation>
    <scope>NUCLEOTIDE SEQUENCE [LARGE SCALE GENOMIC DNA]</scope>
    <source>
        <strain>cv. 93-11</strain>
    </source>
</reference>
<gene>
    <name type="ORF">OsI_08463</name>
</gene>
<evidence type="ECO:0000255" key="1"/>
<evidence type="ECO:0000255" key="2">
    <source>
        <dbReference type="PROSITE-ProRule" id="PRU00714"/>
    </source>
</evidence>
<evidence type="ECO:0000305" key="3"/>
<keyword id="KW-0472">Membrane</keyword>
<keyword id="KW-1185">Reference proteome</keyword>
<keyword id="KW-0812">Transmembrane</keyword>
<keyword id="KW-1133">Transmembrane helix</keyword>
<comment type="subcellular location">
    <subcellularLocation>
        <location evidence="3">Membrane</location>
        <topology evidence="3">Multi-pass membrane protein</topology>
    </subcellularLocation>
</comment>
<comment type="similarity">
    <text evidence="3">Belongs to the major facilitator superfamily.</text>
</comment>
<comment type="sequence caution" evidence="3">
    <conflict type="erroneous gene model prediction">
        <sequence resource="EMBL-CDS" id="EAY87067"/>
    </conflict>
</comment>
<name>SPXM1_ORYSI</name>
<organism>
    <name type="scientific">Oryza sativa subsp. indica</name>
    <name type="common">Rice</name>
    <dbReference type="NCBI Taxonomy" id="39946"/>
    <lineage>
        <taxon>Eukaryota</taxon>
        <taxon>Viridiplantae</taxon>
        <taxon>Streptophyta</taxon>
        <taxon>Embryophyta</taxon>
        <taxon>Tracheophyta</taxon>
        <taxon>Spermatophyta</taxon>
        <taxon>Magnoliopsida</taxon>
        <taxon>Liliopsida</taxon>
        <taxon>Poales</taxon>
        <taxon>Poaceae</taxon>
        <taxon>BOP clade</taxon>
        <taxon>Oryzoideae</taxon>
        <taxon>Oryzeae</taxon>
        <taxon>Oryzinae</taxon>
        <taxon>Oryza</taxon>
        <taxon>Oryza sativa</taxon>
    </lineage>
</organism>
<dbReference type="EMBL" id="CM000127">
    <property type="protein sequence ID" value="EAY87067.1"/>
    <property type="status" value="ALT_SEQ"/>
    <property type="molecule type" value="Genomic_DNA"/>
</dbReference>
<dbReference type="STRING" id="39946.A2X8A7"/>
<dbReference type="EnsemblPlants" id="OsGoSa_02g0028760.01">
    <property type="protein sequence ID" value="OsGoSa_02g0028760.01"/>
    <property type="gene ID" value="OsGoSa_02g0028760"/>
</dbReference>
<dbReference type="EnsemblPlants" id="OsGoSa_02g0028760.02">
    <property type="protein sequence ID" value="OsGoSa_02g0028760.02"/>
    <property type="gene ID" value="OsGoSa_02g0028760"/>
</dbReference>
<dbReference type="EnsemblPlants" id="OsIR64_02g0028420.01">
    <property type="protein sequence ID" value="OsIR64_02g0028420.01"/>
    <property type="gene ID" value="OsIR64_02g0028420"/>
</dbReference>
<dbReference type="EnsemblPlants" id="OsIR64_02g0028420.02">
    <property type="protein sequence ID" value="OsIR64_02g0028420.02"/>
    <property type="gene ID" value="OsIR64_02g0028420"/>
</dbReference>
<dbReference type="EnsemblPlants" id="OsKYG_02g0028470.01">
    <property type="protein sequence ID" value="OsKYG_02g0028470.01"/>
    <property type="gene ID" value="OsKYG_02g0028470"/>
</dbReference>
<dbReference type="EnsemblPlants" id="OsKYG_02g0028470.02">
    <property type="protein sequence ID" value="OsKYG_02g0028470.02"/>
    <property type="gene ID" value="OsKYG_02g0028470"/>
</dbReference>
<dbReference type="EnsemblPlants" id="OsLaMu_02g0028310.02">
    <property type="protein sequence ID" value="OsLaMu_02g0028310.02"/>
    <property type="gene ID" value="OsLaMu_02g0028310"/>
</dbReference>
<dbReference type="EnsemblPlants" id="OsLima_02g0028770.01">
    <property type="protein sequence ID" value="OsLima_02g0028770.01"/>
    <property type="gene ID" value="OsLima_02g0028770"/>
</dbReference>
<dbReference type="EnsemblPlants" id="OsLiXu_02g0028640.01">
    <property type="protein sequence ID" value="OsLiXu_02g0028640.01"/>
    <property type="gene ID" value="OsLiXu_02g0028640"/>
</dbReference>
<dbReference type="EnsemblPlants" id="OsLiXu_02g0028640.02">
    <property type="protein sequence ID" value="OsLiXu_02g0028640.02"/>
    <property type="gene ID" value="OsLiXu_02g0028640"/>
</dbReference>
<dbReference type="EnsemblPlants" id="OsMH63_02G029010_01">
    <property type="protein sequence ID" value="OsMH63_02G029010_01"/>
    <property type="gene ID" value="OsMH63_02G029010"/>
</dbReference>
<dbReference type="EnsemblPlants" id="OsMH63_02G029010_03">
    <property type="protein sequence ID" value="OsMH63_02G029010_03"/>
    <property type="gene ID" value="OsMH63_02G029010"/>
</dbReference>
<dbReference type="EnsemblPlants" id="OsPr106_02g0028620.01">
    <property type="protein sequence ID" value="OsPr106_02g0028620.01"/>
    <property type="gene ID" value="OsPr106_02g0028620"/>
</dbReference>
<dbReference type="EnsemblPlants" id="OsPr106_02g0028620.02">
    <property type="protein sequence ID" value="OsPr106_02g0028620.02"/>
    <property type="gene ID" value="OsPr106_02g0028620"/>
</dbReference>
<dbReference type="EnsemblPlants" id="OsZS97_02G028340_01">
    <property type="protein sequence ID" value="OsZS97_02G028340_01"/>
    <property type="gene ID" value="OsZS97_02G028340"/>
</dbReference>
<dbReference type="EnsemblPlants" id="OsZS97_02G028340_02">
    <property type="protein sequence ID" value="OsZS97_02G028340_02"/>
    <property type="gene ID" value="OsZS97_02G028340"/>
</dbReference>
<dbReference type="EnsemblPlants" id="OsZS97_02G028340_03">
    <property type="protein sequence ID" value="OsZS97_02G028340_03"/>
    <property type="gene ID" value="OsZS97_02G028340"/>
</dbReference>
<dbReference type="Gramene" id="OsGoSa_02g0028760.01">
    <property type="protein sequence ID" value="OsGoSa_02g0028760.01"/>
    <property type="gene ID" value="OsGoSa_02g0028760"/>
</dbReference>
<dbReference type="Gramene" id="OsGoSa_02g0028760.02">
    <property type="protein sequence ID" value="OsGoSa_02g0028760.02"/>
    <property type="gene ID" value="OsGoSa_02g0028760"/>
</dbReference>
<dbReference type="Gramene" id="OsIR64_02g0028420.01">
    <property type="protein sequence ID" value="OsIR64_02g0028420.01"/>
    <property type="gene ID" value="OsIR64_02g0028420"/>
</dbReference>
<dbReference type="Gramene" id="OsIR64_02g0028420.02">
    <property type="protein sequence ID" value="OsIR64_02g0028420.02"/>
    <property type="gene ID" value="OsIR64_02g0028420"/>
</dbReference>
<dbReference type="Gramene" id="OsKYG_02g0028470.01">
    <property type="protein sequence ID" value="OsKYG_02g0028470.01"/>
    <property type="gene ID" value="OsKYG_02g0028470"/>
</dbReference>
<dbReference type="Gramene" id="OsKYG_02g0028470.02">
    <property type="protein sequence ID" value="OsKYG_02g0028470.02"/>
    <property type="gene ID" value="OsKYG_02g0028470"/>
</dbReference>
<dbReference type="Gramene" id="OsLaMu_02g0028310.02">
    <property type="protein sequence ID" value="OsLaMu_02g0028310.02"/>
    <property type="gene ID" value="OsLaMu_02g0028310"/>
</dbReference>
<dbReference type="Gramene" id="OsLima_02g0028770.01">
    <property type="protein sequence ID" value="OsLima_02g0028770.01"/>
    <property type="gene ID" value="OsLima_02g0028770"/>
</dbReference>
<dbReference type="Gramene" id="OsLiXu_02g0028640.01">
    <property type="protein sequence ID" value="OsLiXu_02g0028640.01"/>
    <property type="gene ID" value="OsLiXu_02g0028640"/>
</dbReference>
<dbReference type="Gramene" id="OsLiXu_02g0028640.02">
    <property type="protein sequence ID" value="OsLiXu_02g0028640.02"/>
    <property type="gene ID" value="OsLiXu_02g0028640"/>
</dbReference>
<dbReference type="Gramene" id="OsMH63_02G029010_01">
    <property type="protein sequence ID" value="OsMH63_02G029010_01"/>
    <property type="gene ID" value="OsMH63_02G029010"/>
</dbReference>
<dbReference type="Gramene" id="OsMH63_02G029010_03">
    <property type="protein sequence ID" value="OsMH63_02G029010_03"/>
    <property type="gene ID" value="OsMH63_02G029010"/>
</dbReference>
<dbReference type="Gramene" id="OsPr106_02g0028620.01">
    <property type="protein sequence ID" value="OsPr106_02g0028620.01"/>
    <property type="gene ID" value="OsPr106_02g0028620"/>
</dbReference>
<dbReference type="Gramene" id="OsPr106_02g0028620.02">
    <property type="protein sequence ID" value="OsPr106_02g0028620.02"/>
    <property type="gene ID" value="OsPr106_02g0028620"/>
</dbReference>
<dbReference type="Gramene" id="OsZS97_02G028340_01">
    <property type="protein sequence ID" value="OsZS97_02G028340_01"/>
    <property type="gene ID" value="OsZS97_02G028340"/>
</dbReference>
<dbReference type="Gramene" id="OsZS97_02G028340_02">
    <property type="protein sequence ID" value="OsZS97_02G028340_02"/>
    <property type="gene ID" value="OsZS97_02G028340"/>
</dbReference>
<dbReference type="Gramene" id="OsZS97_02G028340_03">
    <property type="protein sequence ID" value="OsZS97_02G028340_03"/>
    <property type="gene ID" value="OsZS97_02G028340"/>
</dbReference>
<dbReference type="OrthoDB" id="5588846at2759"/>
<dbReference type="Proteomes" id="UP000007015">
    <property type="component" value="Chromosome 2"/>
</dbReference>
<dbReference type="GO" id="GO:0016020">
    <property type="term" value="C:membrane"/>
    <property type="evidence" value="ECO:0007669"/>
    <property type="project" value="UniProtKB-SubCell"/>
</dbReference>
<dbReference type="GO" id="GO:0022857">
    <property type="term" value="F:transmembrane transporter activity"/>
    <property type="evidence" value="ECO:0007669"/>
    <property type="project" value="InterPro"/>
</dbReference>
<dbReference type="CDD" id="cd14479">
    <property type="entry name" value="SPX-MFS_plant"/>
    <property type="match status" value="1"/>
</dbReference>
<dbReference type="Gene3D" id="1.20.1250.20">
    <property type="entry name" value="MFS general substrate transporter like domains"/>
    <property type="match status" value="1"/>
</dbReference>
<dbReference type="InterPro" id="IPR011701">
    <property type="entry name" value="MFS"/>
</dbReference>
<dbReference type="InterPro" id="IPR051068">
    <property type="entry name" value="MFS_Domain-Containing_Protein"/>
</dbReference>
<dbReference type="InterPro" id="IPR036259">
    <property type="entry name" value="MFS_trans_sf"/>
</dbReference>
<dbReference type="InterPro" id="IPR004331">
    <property type="entry name" value="SPX_dom"/>
</dbReference>
<dbReference type="InterPro" id="IPR045264">
    <property type="entry name" value="SPXM_SPX_plant"/>
</dbReference>
<dbReference type="PANTHER" id="PTHR23510">
    <property type="entry name" value="INNER MEMBRANE TRANSPORT PROTEIN YAJR"/>
    <property type="match status" value="1"/>
</dbReference>
<dbReference type="PANTHER" id="PTHR23510:SF23">
    <property type="entry name" value="SPX DOMAIN-CONTAINING MEMBRANE PROTEIN OS02G45520"/>
    <property type="match status" value="1"/>
</dbReference>
<dbReference type="Pfam" id="PF07690">
    <property type="entry name" value="MFS_1"/>
    <property type="match status" value="1"/>
</dbReference>
<dbReference type="Pfam" id="PF03105">
    <property type="entry name" value="SPX"/>
    <property type="match status" value="1"/>
</dbReference>
<dbReference type="SUPFAM" id="SSF103473">
    <property type="entry name" value="MFS general substrate transporter"/>
    <property type="match status" value="1"/>
</dbReference>
<dbReference type="PROSITE" id="PS51382">
    <property type="entry name" value="SPX"/>
    <property type="match status" value="1"/>
</dbReference>
<proteinExistence type="inferred from homology"/>